<accession>Q38V05</accession>
<reference key="1">
    <citation type="journal article" date="2005" name="Nat. Biotechnol.">
        <title>The complete genome sequence of the meat-borne lactic acid bacterium Lactobacillus sakei 23K.</title>
        <authorList>
            <person name="Chaillou S."/>
            <person name="Champomier-Verges M.-C."/>
            <person name="Cornet M."/>
            <person name="Crutz-Le Coq A.-M."/>
            <person name="Dudez A.-M."/>
            <person name="Martin V."/>
            <person name="Beaufils S."/>
            <person name="Darbon-Rongere E."/>
            <person name="Bossy R."/>
            <person name="Loux V."/>
            <person name="Zagorec M."/>
        </authorList>
    </citation>
    <scope>NUCLEOTIDE SEQUENCE [LARGE SCALE GENOMIC DNA]</scope>
    <source>
        <strain>23K</strain>
    </source>
</reference>
<keyword id="KW-0488">Methylation</keyword>
<keyword id="KW-1185">Reference proteome</keyword>
<keyword id="KW-0687">Ribonucleoprotein</keyword>
<keyword id="KW-0689">Ribosomal protein</keyword>
<keyword id="KW-0694">RNA-binding</keyword>
<keyword id="KW-0699">rRNA-binding</keyword>
<evidence type="ECO:0000255" key="1">
    <source>
        <dbReference type="HAMAP-Rule" id="MF_00736"/>
    </source>
</evidence>
<evidence type="ECO:0000305" key="2"/>
<dbReference type="EMBL" id="CR936503">
    <property type="protein sequence ID" value="CAI55979.1"/>
    <property type="molecule type" value="Genomic_DNA"/>
</dbReference>
<dbReference type="RefSeq" id="WP_004270859.1">
    <property type="nucleotide sequence ID" value="NC_007576.1"/>
</dbReference>
<dbReference type="SMR" id="Q38V05"/>
<dbReference type="STRING" id="314315.LCA_1672"/>
<dbReference type="GeneID" id="57132593"/>
<dbReference type="KEGG" id="lsa:LCA_1672"/>
<dbReference type="eggNOG" id="COG0080">
    <property type="taxonomic scope" value="Bacteria"/>
</dbReference>
<dbReference type="HOGENOM" id="CLU_074237_2_1_9"/>
<dbReference type="OrthoDB" id="9802408at2"/>
<dbReference type="Proteomes" id="UP000002707">
    <property type="component" value="Chromosome"/>
</dbReference>
<dbReference type="GO" id="GO:0022625">
    <property type="term" value="C:cytosolic large ribosomal subunit"/>
    <property type="evidence" value="ECO:0007669"/>
    <property type="project" value="TreeGrafter"/>
</dbReference>
<dbReference type="GO" id="GO:0070180">
    <property type="term" value="F:large ribosomal subunit rRNA binding"/>
    <property type="evidence" value="ECO:0007669"/>
    <property type="project" value="UniProtKB-UniRule"/>
</dbReference>
<dbReference type="GO" id="GO:0003735">
    <property type="term" value="F:structural constituent of ribosome"/>
    <property type="evidence" value="ECO:0007669"/>
    <property type="project" value="InterPro"/>
</dbReference>
<dbReference type="GO" id="GO:0006412">
    <property type="term" value="P:translation"/>
    <property type="evidence" value="ECO:0007669"/>
    <property type="project" value="UniProtKB-UniRule"/>
</dbReference>
<dbReference type="CDD" id="cd00349">
    <property type="entry name" value="Ribosomal_L11"/>
    <property type="match status" value="1"/>
</dbReference>
<dbReference type="FunFam" id="1.10.10.250:FF:000001">
    <property type="entry name" value="50S ribosomal protein L11"/>
    <property type="match status" value="1"/>
</dbReference>
<dbReference type="FunFam" id="3.30.1550.10:FF:000001">
    <property type="entry name" value="50S ribosomal protein L11"/>
    <property type="match status" value="1"/>
</dbReference>
<dbReference type="Gene3D" id="1.10.10.250">
    <property type="entry name" value="Ribosomal protein L11, C-terminal domain"/>
    <property type="match status" value="1"/>
</dbReference>
<dbReference type="Gene3D" id="3.30.1550.10">
    <property type="entry name" value="Ribosomal protein L11/L12, N-terminal domain"/>
    <property type="match status" value="1"/>
</dbReference>
<dbReference type="HAMAP" id="MF_00736">
    <property type="entry name" value="Ribosomal_uL11"/>
    <property type="match status" value="1"/>
</dbReference>
<dbReference type="InterPro" id="IPR000911">
    <property type="entry name" value="Ribosomal_uL11"/>
</dbReference>
<dbReference type="InterPro" id="IPR006519">
    <property type="entry name" value="Ribosomal_uL11_bac-typ"/>
</dbReference>
<dbReference type="InterPro" id="IPR020783">
    <property type="entry name" value="Ribosomal_uL11_C"/>
</dbReference>
<dbReference type="InterPro" id="IPR036769">
    <property type="entry name" value="Ribosomal_uL11_C_sf"/>
</dbReference>
<dbReference type="InterPro" id="IPR020785">
    <property type="entry name" value="Ribosomal_uL11_CS"/>
</dbReference>
<dbReference type="InterPro" id="IPR020784">
    <property type="entry name" value="Ribosomal_uL11_N"/>
</dbReference>
<dbReference type="InterPro" id="IPR036796">
    <property type="entry name" value="Ribosomal_uL11_N_sf"/>
</dbReference>
<dbReference type="NCBIfam" id="TIGR01632">
    <property type="entry name" value="L11_bact"/>
    <property type="match status" value="1"/>
</dbReference>
<dbReference type="PANTHER" id="PTHR11661">
    <property type="entry name" value="60S RIBOSOMAL PROTEIN L12"/>
    <property type="match status" value="1"/>
</dbReference>
<dbReference type="PANTHER" id="PTHR11661:SF1">
    <property type="entry name" value="LARGE RIBOSOMAL SUBUNIT PROTEIN UL11M"/>
    <property type="match status" value="1"/>
</dbReference>
<dbReference type="Pfam" id="PF00298">
    <property type="entry name" value="Ribosomal_L11"/>
    <property type="match status" value="1"/>
</dbReference>
<dbReference type="Pfam" id="PF03946">
    <property type="entry name" value="Ribosomal_L11_N"/>
    <property type="match status" value="1"/>
</dbReference>
<dbReference type="SMART" id="SM00649">
    <property type="entry name" value="RL11"/>
    <property type="match status" value="1"/>
</dbReference>
<dbReference type="SUPFAM" id="SSF54747">
    <property type="entry name" value="Ribosomal L11/L12e N-terminal domain"/>
    <property type="match status" value="1"/>
</dbReference>
<dbReference type="SUPFAM" id="SSF46906">
    <property type="entry name" value="Ribosomal protein L11, C-terminal domain"/>
    <property type="match status" value="1"/>
</dbReference>
<dbReference type="PROSITE" id="PS00359">
    <property type="entry name" value="RIBOSOMAL_L11"/>
    <property type="match status" value="1"/>
</dbReference>
<comment type="function">
    <text evidence="1">Forms part of the ribosomal stalk which helps the ribosome interact with GTP-bound translation factors.</text>
</comment>
<comment type="subunit">
    <text evidence="1">Part of the ribosomal stalk of the 50S ribosomal subunit. Interacts with L10 and the large rRNA to form the base of the stalk. L10 forms an elongated spine to which L12 dimers bind in a sequential fashion forming a multimeric L10(L12)X complex.</text>
</comment>
<comment type="PTM">
    <text evidence="1">One or more lysine residues are methylated.</text>
</comment>
<comment type="similarity">
    <text evidence="1">Belongs to the universal ribosomal protein uL11 family.</text>
</comment>
<organism>
    <name type="scientific">Latilactobacillus sakei subsp. sakei (strain 23K)</name>
    <name type="common">Lactobacillus sakei subsp. sakei</name>
    <dbReference type="NCBI Taxonomy" id="314315"/>
    <lineage>
        <taxon>Bacteria</taxon>
        <taxon>Bacillati</taxon>
        <taxon>Bacillota</taxon>
        <taxon>Bacilli</taxon>
        <taxon>Lactobacillales</taxon>
        <taxon>Lactobacillaceae</taxon>
        <taxon>Latilactobacillus</taxon>
    </lineage>
</organism>
<proteinExistence type="inferred from homology"/>
<gene>
    <name evidence="1" type="primary">rplK</name>
    <name type="ordered locus">LCA_1672</name>
</gene>
<protein>
    <recommendedName>
        <fullName evidence="1">Large ribosomal subunit protein uL11</fullName>
    </recommendedName>
    <alternativeName>
        <fullName evidence="2">50S ribosomal protein L11</fullName>
    </alternativeName>
</protein>
<feature type="chain" id="PRO_0000258165" description="Large ribosomal subunit protein uL11">
    <location>
        <begin position="1"/>
        <end position="141"/>
    </location>
</feature>
<name>RL11_LATSS</name>
<sequence>MAKKVANIVKLQIPAGKATPAPPVGPALGQAGINIMGFTKDFNARTADQAGLLIPVVITVYEDRSFDFVTKTPPAAVLLKKAAGVQKGSGEPNTKKVATVTKAQVQEIAETKMQDLNAADVEAAMRMVEGTARSMGFTVEG</sequence>